<feature type="chain" id="PRO_1000058102" description="dCTP deaminase">
    <location>
        <begin position="1"/>
        <end position="193"/>
    </location>
</feature>
<feature type="region of interest" description="Disordered" evidence="2">
    <location>
        <begin position="169"/>
        <end position="193"/>
    </location>
</feature>
<feature type="active site" description="Proton donor/acceptor" evidence="1">
    <location>
        <position position="138"/>
    </location>
</feature>
<feature type="binding site" evidence="1">
    <location>
        <begin position="110"/>
        <end position="115"/>
    </location>
    <ligand>
        <name>dCTP</name>
        <dbReference type="ChEBI" id="CHEBI:61481"/>
    </ligand>
</feature>
<feature type="binding site" evidence="1">
    <location>
        <position position="128"/>
    </location>
    <ligand>
        <name>dCTP</name>
        <dbReference type="ChEBI" id="CHEBI:61481"/>
    </ligand>
</feature>
<feature type="binding site" evidence="1">
    <location>
        <begin position="136"/>
        <end position="138"/>
    </location>
    <ligand>
        <name>dCTP</name>
        <dbReference type="ChEBI" id="CHEBI:61481"/>
    </ligand>
</feature>
<feature type="binding site" evidence="1">
    <location>
        <position position="171"/>
    </location>
    <ligand>
        <name>dCTP</name>
        <dbReference type="ChEBI" id="CHEBI:61481"/>
    </ligand>
</feature>
<feature type="binding site" evidence="1">
    <location>
        <position position="178"/>
    </location>
    <ligand>
        <name>dCTP</name>
        <dbReference type="ChEBI" id="CHEBI:61481"/>
    </ligand>
</feature>
<feature type="binding site" evidence="1">
    <location>
        <position position="182"/>
    </location>
    <ligand>
        <name>dCTP</name>
        <dbReference type="ChEBI" id="CHEBI:61481"/>
    </ligand>
</feature>
<evidence type="ECO:0000255" key="1">
    <source>
        <dbReference type="HAMAP-Rule" id="MF_00146"/>
    </source>
</evidence>
<evidence type="ECO:0000256" key="2">
    <source>
        <dbReference type="SAM" id="MobiDB-lite"/>
    </source>
</evidence>
<gene>
    <name evidence="1" type="primary">dcd</name>
    <name type="ordered locus">EcHS_A2205</name>
</gene>
<protein>
    <recommendedName>
        <fullName evidence="1">dCTP deaminase</fullName>
        <ecNumber evidence="1">3.5.4.13</ecNumber>
    </recommendedName>
    <alternativeName>
        <fullName evidence="1">Deoxycytidine triphosphate deaminase</fullName>
    </alternativeName>
</protein>
<dbReference type="EC" id="3.5.4.13" evidence="1"/>
<dbReference type="EMBL" id="CP000802">
    <property type="protein sequence ID" value="ABV06491.1"/>
    <property type="molecule type" value="Genomic_DNA"/>
</dbReference>
<dbReference type="RefSeq" id="WP_001234767.1">
    <property type="nucleotide sequence ID" value="NC_009800.1"/>
</dbReference>
<dbReference type="SMR" id="A8A1T7"/>
<dbReference type="GeneID" id="93775126"/>
<dbReference type="KEGG" id="ecx:EcHS_A2205"/>
<dbReference type="HOGENOM" id="CLU_087476_2_0_6"/>
<dbReference type="UniPathway" id="UPA00610">
    <property type="reaction ID" value="UER00665"/>
</dbReference>
<dbReference type="GO" id="GO:0008829">
    <property type="term" value="F:dCTP deaminase activity"/>
    <property type="evidence" value="ECO:0007669"/>
    <property type="project" value="UniProtKB-UniRule"/>
</dbReference>
<dbReference type="GO" id="GO:0000166">
    <property type="term" value="F:nucleotide binding"/>
    <property type="evidence" value="ECO:0007669"/>
    <property type="project" value="UniProtKB-KW"/>
</dbReference>
<dbReference type="GO" id="GO:0006226">
    <property type="term" value="P:dUMP biosynthetic process"/>
    <property type="evidence" value="ECO:0007669"/>
    <property type="project" value="UniProtKB-UniPathway"/>
</dbReference>
<dbReference type="GO" id="GO:0006229">
    <property type="term" value="P:dUTP biosynthetic process"/>
    <property type="evidence" value="ECO:0007669"/>
    <property type="project" value="UniProtKB-UniRule"/>
</dbReference>
<dbReference type="GO" id="GO:0015949">
    <property type="term" value="P:nucleobase-containing small molecule interconversion"/>
    <property type="evidence" value="ECO:0007669"/>
    <property type="project" value="TreeGrafter"/>
</dbReference>
<dbReference type="CDD" id="cd07557">
    <property type="entry name" value="trimeric_dUTPase"/>
    <property type="match status" value="1"/>
</dbReference>
<dbReference type="FunFam" id="2.70.40.10:FF:000003">
    <property type="entry name" value="dCTP deaminase"/>
    <property type="match status" value="1"/>
</dbReference>
<dbReference type="Gene3D" id="2.70.40.10">
    <property type="match status" value="1"/>
</dbReference>
<dbReference type="HAMAP" id="MF_00146">
    <property type="entry name" value="dCTP_deaminase"/>
    <property type="match status" value="1"/>
</dbReference>
<dbReference type="InterPro" id="IPR011962">
    <property type="entry name" value="dCTP_deaminase"/>
</dbReference>
<dbReference type="InterPro" id="IPR036157">
    <property type="entry name" value="dUTPase-like_sf"/>
</dbReference>
<dbReference type="InterPro" id="IPR033704">
    <property type="entry name" value="dUTPase_trimeric"/>
</dbReference>
<dbReference type="NCBIfam" id="TIGR02274">
    <property type="entry name" value="dCTP_deam"/>
    <property type="match status" value="1"/>
</dbReference>
<dbReference type="PANTHER" id="PTHR42680">
    <property type="entry name" value="DCTP DEAMINASE"/>
    <property type="match status" value="1"/>
</dbReference>
<dbReference type="PANTHER" id="PTHR42680:SF3">
    <property type="entry name" value="DCTP DEAMINASE"/>
    <property type="match status" value="1"/>
</dbReference>
<dbReference type="Pfam" id="PF22769">
    <property type="entry name" value="DCD"/>
    <property type="match status" value="1"/>
</dbReference>
<dbReference type="SUPFAM" id="SSF51283">
    <property type="entry name" value="dUTPase-like"/>
    <property type="match status" value="1"/>
</dbReference>
<reference key="1">
    <citation type="journal article" date="2008" name="J. Bacteriol.">
        <title>The pangenome structure of Escherichia coli: comparative genomic analysis of E. coli commensal and pathogenic isolates.</title>
        <authorList>
            <person name="Rasko D.A."/>
            <person name="Rosovitz M.J."/>
            <person name="Myers G.S.A."/>
            <person name="Mongodin E.F."/>
            <person name="Fricke W.F."/>
            <person name="Gajer P."/>
            <person name="Crabtree J."/>
            <person name="Sebaihia M."/>
            <person name="Thomson N.R."/>
            <person name="Chaudhuri R."/>
            <person name="Henderson I.R."/>
            <person name="Sperandio V."/>
            <person name="Ravel J."/>
        </authorList>
    </citation>
    <scope>NUCLEOTIDE SEQUENCE [LARGE SCALE GENOMIC DNA]</scope>
    <source>
        <strain>HS</strain>
    </source>
</reference>
<comment type="function">
    <text evidence="1">Catalyzes the deamination of dCTP to dUTP.</text>
</comment>
<comment type="catalytic activity">
    <reaction evidence="1">
        <text>dCTP + H2O + H(+) = dUTP + NH4(+)</text>
        <dbReference type="Rhea" id="RHEA:22680"/>
        <dbReference type="ChEBI" id="CHEBI:15377"/>
        <dbReference type="ChEBI" id="CHEBI:15378"/>
        <dbReference type="ChEBI" id="CHEBI:28938"/>
        <dbReference type="ChEBI" id="CHEBI:61481"/>
        <dbReference type="ChEBI" id="CHEBI:61555"/>
        <dbReference type="EC" id="3.5.4.13"/>
    </reaction>
</comment>
<comment type="pathway">
    <text evidence="1">Pyrimidine metabolism; dUMP biosynthesis; dUMP from dCTP (dUTP route): step 1/2.</text>
</comment>
<comment type="subunit">
    <text evidence="1">Homotrimer.</text>
</comment>
<comment type="similarity">
    <text evidence="1">Belongs to the dCTP deaminase family.</text>
</comment>
<organism>
    <name type="scientific">Escherichia coli O9:H4 (strain HS)</name>
    <dbReference type="NCBI Taxonomy" id="331112"/>
    <lineage>
        <taxon>Bacteria</taxon>
        <taxon>Pseudomonadati</taxon>
        <taxon>Pseudomonadota</taxon>
        <taxon>Gammaproteobacteria</taxon>
        <taxon>Enterobacterales</taxon>
        <taxon>Enterobacteriaceae</taxon>
        <taxon>Escherichia</taxon>
    </lineage>
</organism>
<keyword id="KW-0378">Hydrolase</keyword>
<keyword id="KW-0546">Nucleotide metabolism</keyword>
<keyword id="KW-0547">Nucleotide-binding</keyword>
<proteinExistence type="inferred from homology"/>
<accession>A8A1T7</accession>
<name>DCD_ECOHS</name>
<sequence>MRLCDRDIEAWLDEGRLSINPRPPVERINGATVDVRLGNKFRTFRGHTAAFIDLSGPKDEVSAALDRVMSDEIVLDEGEAFYLHPGELALAVTLESVTLPADLVGWLDGRSSLARLGLMVHVTAHRIDPGWSGCIVLEFYNSGKLPLALRPGMLIGALSFEPLSGPAARPYNRREDAKYRNQQGAVASRIDKD</sequence>